<protein>
    <recommendedName>
        <fullName evidence="8">Phospholipase A2 crotoxin basic subunit CBc</fullName>
        <shortName evidence="8">CB1</shortName>
        <shortName evidence="8">CTX subunit CBc</shortName>
        <shortName evidence="8">svPLA2</shortName>
        <ecNumber evidence="7">3.1.1.4</ecNumber>
    </recommendedName>
    <alternativeName>
        <fullName evidence="8">Phosphatidylcholine 2-acylhydrolase</fullName>
    </alternativeName>
</protein>
<evidence type="ECO:0000250" key="1">
    <source>
        <dbReference type="UniProtKB" id="C0HM14"/>
    </source>
</evidence>
<evidence type="ECO:0000250" key="2">
    <source>
        <dbReference type="UniProtKB" id="P62022"/>
    </source>
</evidence>
<evidence type="ECO:0000255" key="3">
    <source>
        <dbReference type="PIRSR" id="PIRSR601211-1"/>
    </source>
</evidence>
<evidence type="ECO:0000255" key="4">
    <source>
        <dbReference type="PIRSR" id="PIRSR601211-2"/>
    </source>
</evidence>
<evidence type="ECO:0000255" key="5">
    <source>
        <dbReference type="PIRSR" id="PIRSR601211-3"/>
    </source>
</evidence>
<evidence type="ECO:0000255" key="6">
    <source>
        <dbReference type="RuleBase" id="RU361236"/>
    </source>
</evidence>
<evidence type="ECO:0000269" key="7">
    <source>
    </source>
</evidence>
<evidence type="ECO:0000305" key="8"/>
<evidence type="ECO:0000305" key="9">
    <source>
    </source>
</evidence>
<evidence type="ECO:0000305" key="10">
    <source>
    </source>
</evidence>
<evidence type="ECO:0000312" key="11">
    <source>
        <dbReference type="EMBL" id="ANN23915.1"/>
    </source>
</evidence>
<name>PA2BC_CROTA</name>
<feature type="signal peptide" evidence="6">
    <location>
        <begin position="1"/>
        <end position="16"/>
    </location>
</feature>
<feature type="chain" id="PRO_5008443554" description="Phospholipase A2 crotoxin basic subunit CBc" evidence="6">
    <location>
        <begin position="17"/>
        <end position="138"/>
    </location>
</feature>
<feature type="active site" evidence="3">
    <location>
        <position position="63"/>
    </location>
</feature>
<feature type="active site" evidence="3">
    <location>
        <position position="105"/>
    </location>
</feature>
<feature type="binding site" evidence="4">
    <location>
        <position position="43"/>
    </location>
    <ligand>
        <name>Ca(2+)</name>
        <dbReference type="ChEBI" id="CHEBI:29108"/>
    </ligand>
</feature>
<feature type="binding site" evidence="4">
    <location>
        <position position="45"/>
    </location>
    <ligand>
        <name>Ca(2+)</name>
        <dbReference type="ChEBI" id="CHEBI:29108"/>
    </ligand>
</feature>
<feature type="binding site" evidence="4">
    <location>
        <position position="47"/>
    </location>
    <ligand>
        <name>Ca(2+)</name>
        <dbReference type="ChEBI" id="CHEBI:29108"/>
    </ligand>
</feature>
<feature type="binding site" evidence="4">
    <location>
        <position position="64"/>
    </location>
    <ligand>
        <name>Ca(2+)</name>
        <dbReference type="ChEBI" id="CHEBI:29108"/>
    </ligand>
</feature>
<feature type="site" description="Responsible for the weak stability and toxicity" evidence="2">
    <location>
        <position position="17"/>
    </location>
</feature>
<feature type="site" description="Putative interfacial binding surface (IBS)" evidence="2">
    <location>
        <position position="18"/>
    </location>
</feature>
<feature type="site" description="Putative interfacial binding surface (IBS)" evidence="2">
    <location>
        <position position="19"/>
    </location>
</feature>
<feature type="site" description="Putative interfacial binding surface (IBS)" evidence="2">
    <location>
        <position position="23"/>
    </location>
</feature>
<feature type="site" description="Putative interfacial binding surface (IBS)" evidence="2">
    <location>
        <position position="26"/>
    </location>
</feature>
<feature type="site" description="Putative interfacial binding surface (IBS)" evidence="2">
    <location>
        <position position="33"/>
    </location>
</feature>
<feature type="site" description="Putative interfacial binding surface (IBS)" evidence="2">
    <location>
        <position position="38"/>
    </location>
</feature>
<feature type="site" description="Putative interfacial binding surface (IBS)" evidence="2">
    <location>
        <position position="39"/>
    </location>
</feature>
<feature type="site" description="Putative interfacial binding surface (IBS)" evidence="2">
    <location>
        <position position="76"/>
    </location>
</feature>
<feature type="site" description="Putative interfacial binding surface (IBS)" evidence="2">
    <location>
        <position position="119"/>
    </location>
</feature>
<feature type="site" description="Responsible for the higher anticoagulant activity (compared with CBa2)" evidence="2">
    <location>
        <position position="133"/>
    </location>
</feature>
<feature type="disulfide bond" evidence="5">
    <location>
        <begin position="42"/>
        <end position="131"/>
    </location>
</feature>
<feature type="disulfide bond" evidence="5">
    <location>
        <begin position="44"/>
        <end position="60"/>
    </location>
</feature>
<feature type="disulfide bond" evidence="5">
    <location>
        <begin position="59"/>
        <end position="111"/>
    </location>
</feature>
<feature type="disulfide bond" evidence="5">
    <location>
        <begin position="65"/>
        <end position="138"/>
    </location>
</feature>
<feature type="disulfide bond" evidence="5">
    <location>
        <begin position="66"/>
        <end position="104"/>
    </location>
</feature>
<feature type="disulfide bond" evidence="5">
    <location>
        <begin position="73"/>
        <end position="97"/>
    </location>
</feature>
<feature type="disulfide bond" evidence="5">
    <location>
        <begin position="91"/>
        <end position="102"/>
    </location>
</feature>
<reference evidence="11" key="1">
    <citation type="journal article" date="2016" name="PLoS Negl. Trop. Dis.">
        <title>Full-Length Venom Protein cDNA Sequences from Venom-Derived mRNA: Exploring Compositional Variation and Adaptive Multigene Evolution.</title>
        <authorList>
            <person name="Modahl C.M."/>
            <person name="Mackessy S.P."/>
        </authorList>
    </citation>
    <scope>NUCLEOTIDE SEQUENCE [MRNA]</scope>
    <scope>TISSUE SPECIFICITY</scope>
</reference>
<reference key="2">
    <citation type="journal article" date="2022" name="Toxins">
        <title>Crotoxin B: Heterologous Expression, Protein Folding, Immunogenic Properties, and Irregular Presence in Crotalid Venoms.</title>
        <authorList>
            <person name="Mejia-Sanchez M.A."/>
            <person name="Clement H."/>
            <person name="Corrales-Garcia L.L."/>
            <person name="Olamendi-Portugal T."/>
            <person name="Carbajal A."/>
            <person name="Corzo G."/>
        </authorList>
    </citation>
    <scope>NUCLEOTIDE SEQUENCE [MRNA] OF 17-138</scope>
    <scope>PROTEIN SEQUENCE OF 57-69; 77-81 AND 115-130</scope>
    <scope>FUNCTION</scope>
    <scope>CATALYTIC ACTIVITY</scope>
    <scope>ACTIVITY REGULATION</scope>
    <scope>BIOPHYSICOCHEMICAL PROPERTIES</scope>
    <scope>SUBCELLULAR LOCATION</scope>
    <scope>TISSUE SPECIFICITY</scope>
    <scope>BIOTECHNOLOGY</scope>
</reference>
<dbReference type="EC" id="3.1.1.4" evidence="7"/>
<dbReference type="EMBL" id="KU666906">
    <property type="protein sequence ID" value="ANN23915.1"/>
    <property type="molecule type" value="mRNA"/>
</dbReference>
<dbReference type="SMR" id="A0A193CHJ5"/>
<dbReference type="GO" id="GO:0005576">
    <property type="term" value="C:extracellular region"/>
    <property type="evidence" value="ECO:0007669"/>
    <property type="project" value="UniProtKB-SubCell"/>
</dbReference>
<dbReference type="GO" id="GO:0005509">
    <property type="term" value="F:calcium ion binding"/>
    <property type="evidence" value="ECO:0007669"/>
    <property type="project" value="InterPro"/>
</dbReference>
<dbReference type="GO" id="GO:0047498">
    <property type="term" value="F:calcium-dependent phospholipase A2 activity"/>
    <property type="evidence" value="ECO:0007669"/>
    <property type="project" value="TreeGrafter"/>
</dbReference>
<dbReference type="GO" id="GO:0099106">
    <property type="term" value="F:ion channel regulator activity"/>
    <property type="evidence" value="ECO:0007669"/>
    <property type="project" value="UniProtKB-KW"/>
</dbReference>
<dbReference type="GO" id="GO:0005543">
    <property type="term" value="F:phospholipid binding"/>
    <property type="evidence" value="ECO:0007669"/>
    <property type="project" value="TreeGrafter"/>
</dbReference>
<dbReference type="GO" id="GO:0090729">
    <property type="term" value="F:toxin activity"/>
    <property type="evidence" value="ECO:0007669"/>
    <property type="project" value="UniProtKB-KW"/>
</dbReference>
<dbReference type="GO" id="GO:0050482">
    <property type="term" value="P:arachidonate secretion"/>
    <property type="evidence" value="ECO:0007669"/>
    <property type="project" value="InterPro"/>
</dbReference>
<dbReference type="GO" id="GO:0016042">
    <property type="term" value="P:lipid catabolic process"/>
    <property type="evidence" value="ECO:0007669"/>
    <property type="project" value="UniProtKB-KW"/>
</dbReference>
<dbReference type="GO" id="GO:0042130">
    <property type="term" value="P:negative regulation of T cell proliferation"/>
    <property type="evidence" value="ECO:0007669"/>
    <property type="project" value="TreeGrafter"/>
</dbReference>
<dbReference type="GO" id="GO:0006644">
    <property type="term" value="P:phospholipid metabolic process"/>
    <property type="evidence" value="ECO:0007669"/>
    <property type="project" value="InterPro"/>
</dbReference>
<dbReference type="CDD" id="cd00125">
    <property type="entry name" value="PLA2c"/>
    <property type="match status" value="1"/>
</dbReference>
<dbReference type="FunFam" id="1.20.90.10:FF:000001">
    <property type="entry name" value="Basic phospholipase A2 homolog"/>
    <property type="match status" value="1"/>
</dbReference>
<dbReference type="Gene3D" id="1.20.90.10">
    <property type="entry name" value="Phospholipase A2 domain"/>
    <property type="match status" value="1"/>
</dbReference>
<dbReference type="InterPro" id="IPR001211">
    <property type="entry name" value="PLipase_A2"/>
</dbReference>
<dbReference type="InterPro" id="IPR033112">
    <property type="entry name" value="PLipase_A2_Asp_AS"/>
</dbReference>
<dbReference type="InterPro" id="IPR016090">
    <property type="entry name" value="PLipase_A2_dom"/>
</dbReference>
<dbReference type="InterPro" id="IPR036444">
    <property type="entry name" value="PLipase_A2_dom_sf"/>
</dbReference>
<dbReference type="InterPro" id="IPR033113">
    <property type="entry name" value="PLipase_A2_His_AS"/>
</dbReference>
<dbReference type="PANTHER" id="PTHR11716">
    <property type="entry name" value="PHOSPHOLIPASE A2 FAMILY MEMBER"/>
    <property type="match status" value="1"/>
</dbReference>
<dbReference type="PANTHER" id="PTHR11716:SF9">
    <property type="entry name" value="PHOSPHOLIPASE A2, MEMBRANE ASSOCIATED"/>
    <property type="match status" value="1"/>
</dbReference>
<dbReference type="Pfam" id="PF00068">
    <property type="entry name" value="Phospholip_A2_1"/>
    <property type="match status" value="1"/>
</dbReference>
<dbReference type="PRINTS" id="PR00389">
    <property type="entry name" value="PHPHLIPASEA2"/>
</dbReference>
<dbReference type="SMART" id="SM00085">
    <property type="entry name" value="PA2c"/>
    <property type="match status" value="1"/>
</dbReference>
<dbReference type="SUPFAM" id="SSF48619">
    <property type="entry name" value="Phospholipase A2, PLA2"/>
    <property type="match status" value="1"/>
</dbReference>
<dbReference type="PROSITE" id="PS00119">
    <property type="entry name" value="PA2_ASP"/>
    <property type="match status" value="1"/>
</dbReference>
<dbReference type="PROSITE" id="PS00118">
    <property type="entry name" value="PA2_HIS"/>
    <property type="match status" value="1"/>
</dbReference>
<comment type="function">
    <text evidence="1">Heterodimer CA-CB: Crotoxin is a potent presynaptic neurotoxin that possesses phospholipase A2 (PLA2) activity and exerts a lethal action by blocking neuromuscular transmission (By similarity). It consists of a non-covalent association of a basic and weakly toxic PLA2 subunit (CBa2, CBb, CBc, or CBd), with a small acidic, non-enzymatic and non-toxic subunit (CA1, CA2, CA3 or CA4) (By similarity). The complex acts by binding to a specific 48-kDa protein (R48) receptor located on presynaptic membranes, forming a transient ternary complex CA-CB-R48, followed by dissociation of the CA-CB complex and release of the CA subunit (By similarity). At equilibrium, only the CB subunits remain associated with the specific crotoxin receptor (By similarity).</text>
</comment>
<comment type="function">
    <text evidence="2 7">Monomer CBc: The basic subunit of crotoxin is a snake venom phospholipase A2 (PLA2) that exhibits weak neurotoxicity (10-fold less than the heterodimer) and very strong anticoagulant effects by binding to factor Xa (F10) and inhibiting the prothrombinase activity (By similarity). In addition, it shows the same effects described for the heterodimer and binds the nucleotide-binding domain (NBD1) of CFTR chloride channels and increases the channel current (By similarity). PLA2 catalyzes the calcium-dependent hydrolysis of the 2-acyl groups in 3-sn-phosphoglycerides (PubMed:35737043).</text>
</comment>
<comment type="catalytic activity">
    <reaction evidence="7">
        <text>a 1,2-diacyl-sn-glycero-3-phosphocholine + H2O = a 1-acyl-sn-glycero-3-phosphocholine + a fatty acid + H(+)</text>
        <dbReference type="Rhea" id="RHEA:15801"/>
        <dbReference type="ChEBI" id="CHEBI:15377"/>
        <dbReference type="ChEBI" id="CHEBI:15378"/>
        <dbReference type="ChEBI" id="CHEBI:28868"/>
        <dbReference type="ChEBI" id="CHEBI:57643"/>
        <dbReference type="ChEBI" id="CHEBI:58168"/>
        <dbReference type="EC" id="3.1.1.4"/>
    </reaction>
</comment>
<comment type="cofactor">
    <cofactor evidence="4">
        <name>Ca(2+)</name>
        <dbReference type="ChEBI" id="CHEBI:29108"/>
    </cofactor>
    <text evidence="4">Binds 1 Ca(2+) ion per subunit.</text>
</comment>
<comment type="activity regulation">
    <text evidence="7">Phosphatidylcholine 2-acylhydrolase activity as well as activity of complete venom of Crotalus tzabcan is inhibited by antibodies against recombinant phospholipase A2 crotoxin basic subunit CBc produced in rabbit.</text>
</comment>
<comment type="biophysicochemical properties">
    <kinetics>
        <Vmax evidence="7">9.8 umol/min/mg enzyme (monomer CBc)</Vmax>
    </kinetics>
</comment>
<comment type="subunit">
    <text evidence="2">Heterodimer of one of the acidic (CA1, CA2, CA3 or CA4) and one of the basic (CBa1, CBa2, CBb, CBc or CBd) subunits; non-covalently linked (By similarity). The acidic subunit is non-toxic, without enzymatic activity and comprises 3 peptides that are cross-linked by 5 disulfide bridges (By similarity). The basic subunit is toxic, has phospholipase A2 activity and is composed of a single chain (By similarity). Multiple variants of each subunit give different crotoxin complexes that can be subdivided into 2 classes: (1) those of high toxicity, low PLA2 activity (CBb, CBc and CBd linked with high affinity to any CA) and high stability and (2) those of moderate toxicity, high PLA2 activity (CBa2 linked with low affinity to any CA) and low stability (By similarity). Interacts with crotoxin inhibitor from Crotalus serum (CICS); the interaction leads to dissociation of the CA-CB heterodimer and to inhibition of PLA2 activity of the CB subunit (By similarity). Interacts with human NBD1 domain of CFTR (By similarity).</text>
</comment>
<comment type="subcellular location">
    <subcellularLocation>
        <location evidence="6 10">Secreted</location>
    </subcellularLocation>
</comment>
<comment type="tissue specificity">
    <text evidence="7 9">Expressed by the venom gland.</text>
</comment>
<comment type="biotechnology">
    <text evidence="7">Could be a suitable immunogen to raise anti-Crotoxin B and anti-PLA2 antibodies to decrease PLA2 activity of C.tzabcan phospholipases, related to several toxic activities such as myotoxicity or interfering with the platelet function, at least in this C.tzabcan venom.</text>
</comment>
<comment type="miscellaneous">
    <text evidence="2">The crotoxin heterodimer is inhibited by the crotoxin inhibitor from Crotalus serum (CICS) (By similarity). CICS neutralizes the lethal potency of crotoxin and inhibits its PLA2 activity (By similarity). CICS only binds tightly to the CB subunit and induces the dissociation of the heterodimer (By similarity). Tested on the CA2-CBd heterodimer (By similarity).</text>
</comment>
<comment type="miscellaneous">
    <text evidence="7">Antibodies against recombinant phospholipase A2 crotoxin basic subunit CBc produced in rabbit are able to neutralize whole venoms of C.tzabcan, C.s.salvini, and C.mictlantecuhtli.</text>
</comment>
<comment type="similarity">
    <text evidence="8">Belongs to the phospholipase A2 family. Group II subfamily. D49 sub-subfamily.</text>
</comment>
<proteinExistence type="evidence at protein level"/>
<accession>A0A193CHJ5</accession>
<sequence>MRALWIVAVLLVGVEGHLLQFNKMIKFETRKNAIPFYAFYGCYCGWGGRGRPKDATDRCCFVHDCCYGKLAKCNTKWDIYPYSLKSGYITCGKGTWCEEQICECDRVAAECLRRSLSTYKYGYMFYPDSRCRGPSETC</sequence>
<keyword id="KW-1203">Blood coagulation cascade inhibiting toxin</keyword>
<keyword id="KW-0106">Calcium</keyword>
<keyword id="KW-0903">Direct protein sequencing</keyword>
<keyword id="KW-1015">Disulfide bond</keyword>
<keyword id="KW-1199">Hemostasis impairing toxin</keyword>
<keyword id="KW-0378">Hydrolase</keyword>
<keyword id="KW-0872">Ion channel impairing toxin</keyword>
<keyword id="KW-0442">Lipid degradation</keyword>
<keyword id="KW-0443">Lipid metabolism</keyword>
<keyword id="KW-0479">Metal-binding</keyword>
<keyword id="KW-0528">Neurotoxin</keyword>
<keyword id="KW-0638">Presynaptic neurotoxin</keyword>
<keyword id="KW-0964">Secreted</keyword>
<keyword id="KW-0732">Signal</keyword>
<keyword id="KW-0800">Toxin</keyword>
<organism evidence="11">
    <name type="scientific">Crotalus tzabcan</name>
    <name type="common">Yucatan neotropical rattlesnake</name>
    <name type="synonym">Crotalus simus tzabcan</name>
    <dbReference type="NCBI Taxonomy" id="1043006"/>
    <lineage>
        <taxon>Eukaryota</taxon>
        <taxon>Metazoa</taxon>
        <taxon>Chordata</taxon>
        <taxon>Craniata</taxon>
        <taxon>Vertebrata</taxon>
        <taxon>Euteleostomi</taxon>
        <taxon>Lepidosauria</taxon>
        <taxon>Squamata</taxon>
        <taxon>Bifurcata</taxon>
        <taxon>Unidentata</taxon>
        <taxon>Episquamata</taxon>
        <taxon>Toxicofera</taxon>
        <taxon>Serpentes</taxon>
        <taxon>Colubroidea</taxon>
        <taxon>Viperidae</taxon>
        <taxon>Crotalinae</taxon>
        <taxon>Crotalus</taxon>
    </lineage>
</organism>